<comment type="function">
    <text evidence="3">Part of the ABC transporter complex ThiBPQ involved in thiamine import (PubMed:9535878). Is also involved in thiamine pyrophosphate transport (PubMed:9535878).</text>
</comment>
<comment type="subunit">
    <text evidence="6">The complex is composed of two ATP-binding proteins (ThiQ), two transmembrane proteins (ThiP) and a solute-binding protein (ThiB).</text>
</comment>
<comment type="subcellular location">
    <subcellularLocation>
        <location evidence="1">Periplasm</location>
    </subcellularLocation>
</comment>
<comment type="induction">
    <text evidence="3">Expression is repressed by thiamine.</text>
</comment>
<comment type="disruption phenotype">
    <text evidence="3">Insertions in thiBPQ cause a defect in the transport of both thiamine and TPP.</text>
</comment>
<comment type="similarity">
    <text evidence="5">Belongs to the bacterial solute-binding protein 1 family.</text>
</comment>
<name>THIB_SALTY</name>
<sequence>MLKKYLPLLLLCAAPAFAKPVLTVYTYDSFAADWGPGPAVKKAFEADCNCELKLVALEDGVSLLNRLRMEGKNSKADVVLGLDNNLLEAATQTKLFAKSGVANEAVKVPGGWKNDTFVPFDYGYFAFVYDKSKLKNPPKSLKELVESDQKWRVIYQDPRTSTPGLGLLLWMRKVYGDNAPQAWQKLAAKTVTVTKGWSEAYGLFLKGESDLVLSYTTSPAYHIIEEKKDNYAAANFSEGHYLQVEVAARTVASKQPELAEKFLKFMVSPAFQNAIPTGNWMYPVADVALPAGFESLAKPATTLEFTPQQVAAQRQAWISEWQRAVSR</sequence>
<keyword id="KW-0574">Periplasm</keyword>
<keyword id="KW-1185">Reference proteome</keyword>
<keyword id="KW-0732">Signal</keyword>
<keyword id="KW-0813">Transport</keyword>
<proteinExistence type="evidence at protein level"/>
<evidence type="ECO:0000250" key="1">
    <source>
        <dbReference type="UniProtKB" id="P31550"/>
    </source>
</evidence>
<evidence type="ECO:0000255" key="2"/>
<evidence type="ECO:0000269" key="3">
    <source>
    </source>
</evidence>
<evidence type="ECO:0000303" key="4">
    <source>
    </source>
</evidence>
<evidence type="ECO:0000305" key="5"/>
<evidence type="ECO:0000305" key="6">
    <source>
    </source>
</evidence>
<evidence type="ECO:0000312" key="7">
    <source>
        <dbReference type="EMBL" id="AAL19072.1"/>
    </source>
</evidence>
<protein>
    <recommendedName>
        <fullName evidence="5">Thiamine-binding periplasmic protein</fullName>
    </recommendedName>
</protein>
<gene>
    <name evidence="4" type="primary">thiB</name>
    <name evidence="7" type="synonym">tbpA</name>
    <name evidence="7" type="ordered locus">STM0108</name>
</gene>
<reference key="1">
    <citation type="journal article" date="2001" name="Nature">
        <title>Complete genome sequence of Salmonella enterica serovar Typhimurium LT2.</title>
        <authorList>
            <person name="McClelland M."/>
            <person name="Sanderson K.E."/>
            <person name="Spieth J."/>
            <person name="Clifton S.W."/>
            <person name="Latreille P."/>
            <person name="Courtney L."/>
            <person name="Porwollik S."/>
            <person name="Ali J."/>
            <person name="Dante M."/>
            <person name="Du F."/>
            <person name="Hou S."/>
            <person name="Layman D."/>
            <person name="Leonard S."/>
            <person name="Nguyen C."/>
            <person name="Scott K."/>
            <person name="Holmes A."/>
            <person name="Grewal N."/>
            <person name="Mulvaney E."/>
            <person name="Ryan E."/>
            <person name="Sun H."/>
            <person name="Florea L."/>
            <person name="Miller W."/>
            <person name="Stoneking T."/>
            <person name="Nhan M."/>
            <person name="Waterston R."/>
            <person name="Wilson R.K."/>
        </authorList>
    </citation>
    <scope>NUCLEOTIDE SEQUENCE [LARGE SCALE GENOMIC DNA]</scope>
    <source>
        <strain>LT2 / SGSC1412 / ATCC 700720</strain>
    </source>
</reference>
<reference key="2">
    <citation type="journal article" date="1998" name="J. Biol. Chem.">
        <title>thiBPQ encodes an ABC transporter required for transport of thiamine and thiamine pyrophosphate in Salmonella typhimurium.</title>
        <authorList>
            <person name="Webb E."/>
            <person name="Claas K."/>
            <person name="Downs D."/>
        </authorList>
    </citation>
    <scope>FUNCTION IN THIAMINE AND THIAMINE PYROPHOSPHATE TRANSPORT</scope>
    <scope>SUBUNIT</scope>
    <scope>INDUCTION</scope>
    <scope>DISRUPTION PHENOTYPE</scope>
    <source>
        <strain>LT2</strain>
    </source>
</reference>
<feature type="signal peptide" evidence="2">
    <location>
        <begin position="1"/>
        <end position="18"/>
    </location>
</feature>
<feature type="chain" id="PRO_5004287048" description="Thiamine-binding periplasmic protein">
    <location>
        <begin position="19"/>
        <end position="327"/>
    </location>
</feature>
<feature type="binding site" evidence="1">
    <location>
        <begin position="59"/>
        <end position="60"/>
    </location>
    <ligand>
        <name>thiamine</name>
        <dbReference type="ChEBI" id="CHEBI:18385"/>
    </ligand>
</feature>
<feature type="binding site" evidence="1">
    <location>
        <begin position="161"/>
        <end position="162"/>
    </location>
    <ligand>
        <name>thiamine</name>
        <dbReference type="ChEBI" id="CHEBI:18385"/>
    </ligand>
</feature>
<feature type="binding site" evidence="1">
    <location>
        <position position="197"/>
    </location>
    <ligand>
        <name>thiamine</name>
        <dbReference type="ChEBI" id="CHEBI:18385"/>
    </ligand>
</feature>
<feature type="binding site" evidence="1">
    <location>
        <begin position="215"/>
        <end position="218"/>
    </location>
    <ligand>
        <name>thiamine</name>
        <dbReference type="ChEBI" id="CHEBI:18385"/>
    </ligand>
</feature>
<accession>Q7CR85</accession>
<dbReference type="EMBL" id="AE006468">
    <property type="protein sequence ID" value="AAL19072.1"/>
    <property type="molecule type" value="Genomic_DNA"/>
</dbReference>
<dbReference type="RefSeq" id="NP_459113.1">
    <property type="nucleotide sequence ID" value="NC_003197.2"/>
</dbReference>
<dbReference type="RefSeq" id="WP_000915326.1">
    <property type="nucleotide sequence ID" value="NC_003197.2"/>
</dbReference>
<dbReference type="SMR" id="Q7CR85"/>
<dbReference type="STRING" id="99287.STM0108"/>
<dbReference type="PaxDb" id="99287-STM0108"/>
<dbReference type="GeneID" id="1251626"/>
<dbReference type="KEGG" id="stm:STM0108"/>
<dbReference type="PATRIC" id="fig|99287.12.peg.111"/>
<dbReference type="HOGENOM" id="CLU_026974_6_0_6"/>
<dbReference type="OMA" id="PTTNWMY"/>
<dbReference type="PhylomeDB" id="Q7CR85"/>
<dbReference type="BioCyc" id="SENT99287:STM0108-MONOMER"/>
<dbReference type="Proteomes" id="UP000001014">
    <property type="component" value="Chromosome"/>
</dbReference>
<dbReference type="GO" id="GO:0030288">
    <property type="term" value="C:outer membrane-bounded periplasmic space"/>
    <property type="evidence" value="ECO:0000318"/>
    <property type="project" value="GO_Central"/>
</dbReference>
<dbReference type="GO" id="GO:0030975">
    <property type="term" value="F:thiamine binding"/>
    <property type="evidence" value="ECO:0000318"/>
    <property type="project" value="GO_Central"/>
</dbReference>
<dbReference type="GO" id="GO:0030976">
    <property type="term" value="F:thiamine pyrophosphate binding"/>
    <property type="evidence" value="ECO:0000318"/>
    <property type="project" value="GO_Central"/>
</dbReference>
<dbReference type="GO" id="GO:0015888">
    <property type="term" value="P:thiamine transport"/>
    <property type="evidence" value="ECO:0000318"/>
    <property type="project" value="GO_Central"/>
</dbReference>
<dbReference type="GO" id="GO:0055085">
    <property type="term" value="P:transmembrane transport"/>
    <property type="evidence" value="ECO:0007669"/>
    <property type="project" value="InterPro"/>
</dbReference>
<dbReference type="CDD" id="cd13545">
    <property type="entry name" value="PBP2_TbpA"/>
    <property type="match status" value="1"/>
</dbReference>
<dbReference type="Gene3D" id="3.40.190.10">
    <property type="entry name" value="Periplasmic binding protein-like II"/>
    <property type="match status" value="2"/>
</dbReference>
<dbReference type="InterPro" id="IPR006059">
    <property type="entry name" value="SBP"/>
</dbReference>
<dbReference type="InterPro" id="IPR006061">
    <property type="entry name" value="SBP_1_CS"/>
</dbReference>
<dbReference type="InterPro" id="IPR005967">
    <property type="entry name" value="ThiB"/>
</dbReference>
<dbReference type="InterPro" id="IPR005948">
    <property type="entry name" value="ThiB-like"/>
</dbReference>
<dbReference type="NCBIfam" id="TIGR01254">
    <property type="entry name" value="sfuA"/>
    <property type="match status" value="1"/>
</dbReference>
<dbReference type="NCBIfam" id="TIGR01276">
    <property type="entry name" value="thiB"/>
    <property type="match status" value="1"/>
</dbReference>
<dbReference type="PANTHER" id="PTHR30006:SF3">
    <property type="entry name" value="THIAMINE-BINDING PERIPLASMIC PROTEIN"/>
    <property type="match status" value="1"/>
</dbReference>
<dbReference type="PANTHER" id="PTHR30006">
    <property type="entry name" value="THIAMINE-BINDING PERIPLASMIC PROTEIN-RELATED"/>
    <property type="match status" value="1"/>
</dbReference>
<dbReference type="Pfam" id="PF01547">
    <property type="entry name" value="SBP_bac_1"/>
    <property type="match status" value="1"/>
</dbReference>
<dbReference type="SUPFAM" id="SSF53850">
    <property type="entry name" value="Periplasmic binding protein-like II"/>
    <property type="match status" value="1"/>
</dbReference>
<dbReference type="PROSITE" id="PS01037">
    <property type="entry name" value="SBP_BACTERIAL_1"/>
    <property type="match status" value="1"/>
</dbReference>
<organism>
    <name type="scientific">Salmonella typhimurium (strain LT2 / SGSC1412 / ATCC 700720)</name>
    <dbReference type="NCBI Taxonomy" id="99287"/>
    <lineage>
        <taxon>Bacteria</taxon>
        <taxon>Pseudomonadati</taxon>
        <taxon>Pseudomonadota</taxon>
        <taxon>Gammaproteobacteria</taxon>
        <taxon>Enterobacterales</taxon>
        <taxon>Enterobacteriaceae</taxon>
        <taxon>Salmonella</taxon>
    </lineage>
</organism>